<proteinExistence type="inferred from homology"/>
<name>RPOB_SOLTU</name>
<comment type="function">
    <text evidence="1">DNA-dependent RNA polymerase catalyzes the transcription of DNA into RNA using the four ribonucleoside triphosphates as substrates.</text>
</comment>
<comment type="catalytic activity">
    <reaction evidence="1">
        <text>RNA(n) + a ribonucleoside 5'-triphosphate = RNA(n+1) + diphosphate</text>
        <dbReference type="Rhea" id="RHEA:21248"/>
        <dbReference type="Rhea" id="RHEA-COMP:14527"/>
        <dbReference type="Rhea" id="RHEA-COMP:17342"/>
        <dbReference type="ChEBI" id="CHEBI:33019"/>
        <dbReference type="ChEBI" id="CHEBI:61557"/>
        <dbReference type="ChEBI" id="CHEBI:140395"/>
        <dbReference type="EC" id="2.7.7.6"/>
    </reaction>
</comment>
<comment type="subunit">
    <text evidence="1">In plastids the minimal PEP RNA polymerase catalytic core is composed of four subunits: alpha, beta, beta', and beta''. When a (nuclear-encoded) sigma factor is associated with the core the holoenzyme is formed, which can initiate transcription.</text>
</comment>
<comment type="subcellular location">
    <subcellularLocation>
        <location>Plastid</location>
        <location>Chloroplast</location>
    </subcellularLocation>
</comment>
<comment type="similarity">
    <text evidence="1">Belongs to the RNA polymerase beta chain family.</text>
</comment>
<feature type="chain" id="PRO_0000224133" description="DNA-directed RNA polymerase subunit beta">
    <location>
        <begin position="1"/>
        <end position="1070"/>
    </location>
</feature>
<feature type="sequence conflict" description="In Ref. 2; ABD47049." evidence="2" ref="2">
    <original>I</original>
    <variation>M</variation>
    <location>
        <position position="660"/>
    </location>
</feature>
<feature type="sequence conflict" description="In Ref. 2; ABD47049." evidence="2" ref="2">
    <original>T</original>
    <variation>S</variation>
    <location>
        <position position="674"/>
    </location>
</feature>
<geneLocation type="chloroplast"/>
<keyword id="KW-0150">Chloroplast</keyword>
<keyword id="KW-0240">DNA-directed RNA polymerase</keyword>
<keyword id="KW-0548">Nucleotidyltransferase</keyword>
<keyword id="KW-0934">Plastid</keyword>
<keyword id="KW-1185">Reference proteome</keyword>
<keyword id="KW-0804">Transcription</keyword>
<keyword id="KW-0808">Transferase</keyword>
<protein>
    <recommendedName>
        <fullName evidence="1">DNA-directed RNA polymerase subunit beta</fullName>
        <ecNumber evidence="1">2.7.7.6</ecNumber>
    </recommendedName>
    <alternativeName>
        <fullName evidence="1">PEP</fullName>
    </alternativeName>
    <alternativeName>
        <fullName evidence="1">Plastid-encoded RNA polymerase subunit beta</fullName>
        <shortName evidence="1">RNA polymerase subunit beta</shortName>
    </alternativeName>
</protein>
<accession>Q2VEI4</accession>
<accession>Q27S58</accession>
<evidence type="ECO:0000255" key="1">
    <source>
        <dbReference type="HAMAP-Rule" id="MF_01321"/>
    </source>
</evidence>
<evidence type="ECO:0000305" key="2"/>
<dbReference type="EC" id="2.7.7.6" evidence="1"/>
<dbReference type="EMBL" id="DQ231562">
    <property type="protein sequence ID" value="ABB90035.1"/>
    <property type="molecule type" value="Genomic_DNA"/>
</dbReference>
<dbReference type="EMBL" id="DQ386163">
    <property type="protein sequence ID" value="ABD47049.1"/>
    <property type="molecule type" value="Genomic_DNA"/>
</dbReference>
<dbReference type="RefSeq" id="YP_635631.1">
    <property type="nucleotide sequence ID" value="NC_008096.2"/>
</dbReference>
<dbReference type="SMR" id="Q2VEI4"/>
<dbReference type="FunCoup" id="Q2VEI4">
    <property type="interactions" value="213"/>
</dbReference>
<dbReference type="STRING" id="4113.Q2VEI4"/>
<dbReference type="PaxDb" id="4113-PGSC0003DMT400045541"/>
<dbReference type="GeneID" id="4099994"/>
<dbReference type="KEGG" id="sot:4099994"/>
<dbReference type="eggNOG" id="KOG0214">
    <property type="taxonomic scope" value="Eukaryota"/>
</dbReference>
<dbReference type="InParanoid" id="Q2VEI4"/>
<dbReference type="OrthoDB" id="1678757at2759"/>
<dbReference type="Proteomes" id="UP000011115">
    <property type="component" value="Unassembled WGS sequence"/>
</dbReference>
<dbReference type="ExpressionAtlas" id="Q2VEI4">
    <property type="expression patterns" value="baseline"/>
</dbReference>
<dbReference type="GO" id="GO:0009507">
    <property type="term" value="C:chloroplast"/>
    <property type="evidence" value="ECO:0007669"/>
    <property type="project" value="UniProtKB-SubCell"/>
</dbReference>
<dbReference type="GO" id="GO:0000428">
    <property type="term" value="C:DNA-directed RNA polymerase complex"/>
    <property type="evidence" value="ECO:0007669"/>
    <property type="project" value="UniProtKB-KW"/>
</dbReference>
<dbReference type="GO" id="GO:0005739">
    <property type="term" value="C:mitochondrion"/>
    <property type="evidence" value="ECO:0007669"/>
    <property type="project" value="GOC"/>
</dbReference>
<dbReference type="GO" id="GO:0003677">
    <property type="term" value="F:DNA binding"/>
    <property type="evidence" value="ECO:0007669"/>
    <property type="project" value="UniProtKB-UniRule"/>
</dbReference>
<dbReference type="GO" id="GO:0003899">
    <property type="term" value="F:DNA-directed RNA polymerase activity"/>
    <property type="evidence" value="ECO:0007669"/>
    <property type="project" value="UniProtKB-UniRule"/>
</dbReference>
<dbReference type="GO" id="GO:0032549">
    <property type="term" value="F:ribonucleoside binding"/>
    <property type="evidence" value="ECO:0007669"/>
    <property type="project" value="InterPro"/>
</dbReference>
<dbReference type="GO" id="GO:0006351">
    <property type="term" value="P:DNA-templated transcription"/>
    <property type="evidence" value="ECO:0007669"/>
    <property type="project" value="UniProtKB-UniRule"/>
</dbReference>
<dbReference type="CDD" id="cd00653">
    <property type="entry name" value="RNA_pol_B_RPB2"/>
    <property type="match status" value="1"/>
</dbReference>
<dbReference type="FunFam" id="3.90.1110.10:FF:000009">
    <property type="entry name" value="DNA-directed RNA polymerase subunit beta"/>
    <property type="match status" value="1"/>
</dbReference>
<dbReference type="Gene3D" id="2.40.50.100">
    <property type="match status" value="1"/>
</dbReference>
<dbReference type="Gene3D" id="2.40.50.150">
    <property type="match status" value="1"/>
</dbReference>
<dbReference type="Gene3D" id="3.90.1100.10">
    <property type="match status" value="1"/>
</dbReference>
<dbReference type="Gene3D" id="2.30.150.10">
    <property type="entry name" value="DNA-directed RNA polymerase, beta subunit, external 1 domain"/>
    <property type="match status" value="1"/>
</dbReference>
<dbReference type="Gene3D" id="2.40.270.10">
    <property type="entry name" value="DNA-directed RNA polymerase, subunit 2, domain 6"/>
    <property type="match status" value="1"/>
</dbReference>
<dbReference type="Gene3D" id="3.90.1800.10">
    <property type="entry name" value="RNA polymerase alpha subunit dimerisation domain"/>
    <property type="match status" value="1"/>
</dbReference>
<dbReference type="Gene3D" id="3.90.1110.10">
    <property type="entry name" value="RNA polymerase Rpb2, domain 2"/>
    <property type="match status" value="1"/>
</dbReference>
<dbReference type="HAMAP" id="MF_01321">
    <property type="entry name" value="RNApol_bact_RpoB"/>
    <property type="match status" value="1"/>
</dbReference>
<dbReference type="InterPro" id="IPR042107">
    <property type="entry name" value="DNA-dir_RNA_pol_bsu_ext_1_sf"/>
</dbReference>
<dbReference type="InterPro" id="IPR015712">
    <property type="entry name" value="DNA-dir_RNA_pol_su2"/>
</dbReference>
<dbReference type="InterPro" id="IPR007120">
    <property type="entry name" value="DNA-dir_RNAP_su2_dom"/>
</dbReference>
<dbReference type="InterPro" id="IPR037033">
    <property type="entry name" value="DNA-dir_RNAP_su2_hyb_sf"/>
</dbReference>
<dbReference type="InterPro" id="IPR010243">
    <property type="entry name" value="RNA_pol_bsu_bac"/>
</dbReference>
<dbReference type="InterPro" id="IPR007121">
    <property type="entry name" value="RNA_pol_bsu_CS"/>
</dbReference>
<dbReference type="InterPro" id="IPR007642">
    <property type="entry name" value="RNA_pol_Rpb2_2"/>
</dbReference>
<dbReference type="InterPro" id="IPR037034">
    <property type="entry name" value="RNA_pol_Rpb2_2_sf"/>
</dbReference>
<dbReference type="InterPro" id="IPR007645">
    <property type="entry name" value="RNA_pol_Rpb2_3"/>
</dbReference>
<dbReference type="InterPro" id="IPR007641">
    <property type="entry name" value="RNA_pol_Rpb2_7"/>
</dbReference>
<dbReference type="InterPro" id="IPR014724">
    <property type="entry name" value="RNA_pol_RPB2_OB-fold"/>
</dbReference>
<dbReference type="NCBIfam" id="NF001616">
    <property type="entry name" value="PRK00405.1"/>
    <property type="match status" value="1"/>
</dbReference>
<dbReference type="PANTHER" id="PTHR20856">
    <property type="entry name" value="DNA-DIRECTED RNA POLYMERASE I SUBUNIT 2"/>
    <property type="match status" value="1"/>
</dbReference>
<dbReference type="Pfam" id="PF04561">
    <property type="entry name" value="RNA_pol_Rpb2_2"/>
    <property type="match status" value="1"/>
</dbReference>
<dbReference type="Pfam" id="PF04565">
    <property type="entry name" value="RNA_pol_Rpb2_3"/>
    <property type="match status" value="1"/>
</dbReference>
<dbReference type="Pfam" id="PF00562">
    <property type="entry name" value="RNA_pol_Rpb2_6"/>
    <property type="match status" value="1"/>
</dbReference>
<dbReference type="Pfam" id="PF04560">
    <property type="entry name" value="RNA_pol_Rpb2_7"/>
    <property type="match status" value="1"/>
</dbReference>
<dbReference type="SUPFAM" id="SSF64484">
    <property type="entry name" value="beta and beta-prime subunits of DNA dependent RNA-polymerase"/>
    <property type="match status" value="1"/>
</dbReference>
<dbReference type="PROSITE" id="PS01166">
    <property type="entry name" value="RNA_POL_BETA"/>
    <property type="match status" value="1"/>
</dbReference>
<organism>
    <name type="scientific">Solanum tuberosum</name>
    <name type="common">Potato</name>
    <dbReference type="NCBI Taxonomy" id="4113"/>
    <lineage>
        <taxon>Eukaryota</taxon>
        <taxon>Viridiplantae</taxon>
        <taxon>Streptophyta</taxon>
        <taxon>Embryophyta</taxon>
        <taxon>Tracheophyta</taxon>
        <taxon>Spermatophyta</taxon>
        <taxon>Magnoliopsida</taxon>
        <taxon>eudicotyledons</taxon>
        <taxon>Gunneridae</taxon>
        <taxon>Pentapetalae</taxon>
        <taxon>asterids</taxon>
        <taxon>lamiids</taxon>
        <taxon>Solanales</taxon>
        <taxon>Solanaceae</taxon>
        <taxon>Solanoideae</taxon>
        <taxon>Solaneae</taxon>
        <taxon>Solanum</taxon>
    </lineage>
</organism>
<reference key="1">
    <citation type="journal article" date="2006" name="Plant Cell Rep.">
        <title>The complete chloroplast genome sequences of Solanum tuberosum and comparative analysis with Solanaceae species identified the presence of a 241-bp deletion in cultivated potato chloroplast DNA sequence.</title>
        <authorList>
            <person name="Chung H.-J."/>
            <person name="Jung J.D."/>
            <person name="Park H.-W."/>
            <person name="Kim J.-H."/>
            <person name="Cha H.W."/>
            <person name="Min S.R."/>
            <person name="Jeong W.-J."/>
            <person name="Liu J.R."/>
        </authorList>
    </citation>
    <scope>NUCLEOTIDE SEQUENCE [LARGE SCALE GENOMIC DNA]</scope>
    <source>
        <strain>cv. Desiree</strain>
    </source>
</reference>
<reference key="2">
    <citation type="submission" date="2006-02" db="EMBL/GenBank/DDBJ databases">
        <title>Complete chloroplast genome sequences of Solanum tuberosum cultivar Desiree and comparative analyses with other Solanaceae genomes.</title>
        <authorList>
            <person name="Gargano D."/>
            <person name="Scotti N."/>
            <person name="Vezzi A."/>
            <person name="Bilardi A."/>
            <person name="Valle G."/>
            <person name="Grillo S."/>
            <person name="Cardi T."/>
        </authorList>
    </citation>
    <scope>NUCLEOTIDE SEQUENCE [LARGE SCALE GENOMIC DNA]</scope>
    <source>
        <strain>cv. Desiree</strain>
    </source>
</reference>
<sequence length="1070" mass="120628">MLGDGNEGISTIPGFNQIQFEGFCRFIDQGLTEELYKFPKIEDTDQEIEFQLFVETYQLVEPLIKERDAVYESLTYSSELYVSAGLIWKNSRDMQEQTIFIGNIPLMNSLGTSIVNGIYRIVINQILQSPGIYYRSELDHNGISVYTGTIISDWGGRSELEIDRKARIWARVSRKQKISILVLSSAMGLNLREILENVCYPEIFLSFLNDKERKKIGSKENSILEFYQQFACVGGDPVFSESLCKELQKKFFQQRCELGRIGRRNMNRKLNLDIPQNNTFLLPRDILAAADHLIGLKFGMGALDDMNHLKNKRIRSVADLLQDQFGLALVRLENVVRGTICGAIRHKLIPTPQNLVTSPPLTTTYESFFGLHPLSQVLDRTNPLTQIVHGRKLSYLGPGGLTGRTASFRIRDIHPSHYGRICPIDTSEGINVGLIGSLSIHARIGHWGSLESPFYEISERSTGVRMLYLSPGSDEYYMVAAGNSLALNRDIQEEQVVPARYRQEFLTIAWEQVHLRSIFPFQYFSIGASLIPFIEHNDANRALMSSNMQRQAVPLSRSEKCIVGTGLERQAALDSGALAIAEREGRIVYTNTDKILLAGNGDILSIPLVIYQRSNKNTCMHQKLRVPRGKCIKKGQILADGAATVGGELALGKNVLVAYIPWEGYNFEDAVLITERLVYEDIYTSFHIRKYEIHTHVTSQGPEKVTNEIPHLEAHLLRNLDKKGIVMLGSWVETGDILVGKLTPQVVKESSYAPEDRLLRAILGIQVSTSKETCLKLPIGGRGRVIDVRWIQKRGGSSYNPETIRVYISQKREIKVGDKVAGRHGNKGIISKILPRQDMPYLQDGRSVDMVFNPLGVPSRMNVGQIFECSLGLAGSLLDRHYRIAPFDERYEQEASRKLVFSELYEASKQTANPWVFEPEYPGKSRIFDGRTGNPFEQPVIIGKPYILKLIHQVDDKIHGRSSGHYALVTQQPLRGRAKQGGQRVGEMEVWALEGFGVAHILQEMLTYKSDHIRARQEVLGTTIIGGTIPNPEDAPESFRLLVRELRSLALELNHFLVSEKNFQINRKEA</sequence>
<gene>
    <name evidence="1" type="primary">rpoB</name>
</gene>